<proteinExistence type="inferred from homology"/>
<reference key="1">
    <citation type="submission" date="2007-02" db="EMBL/GenBank/DDBJ databases">
        <title>Complete sequence of Clostridium thermocellum ATCC 27405.</title>
        <authorList>
            <consortium name="US DOE Joint Genome Institute"/>
            <person name="Copeland A."/>
            <person name="Lucas S."/>
            <person name="Lapidus A."/>
            <person name="Barry K."/>
            <person name="Detter J.C."/>
            <person name="Glavina del Rio T."/>
            <person name="Hammon N."/>
            <person name="Israni S."/>
            <person name="Dalin E."/>
            <person name="Tice H."/>
            <person name="Pitluck S."/>
            <person name="Chertkov O."/>
            <person name="Brettin T."/>
            <person name="Bruce D."/>
            <person name="Han C."/>
            <person name="Tapia R."/>
            <person name="Gilna P."/>
            <person name="Schmutz J."/>
            <person name="Larimer F."/>
            <person name="Land M."/>
            <person name="Hauser L."/>
            <person name="Kyrpides N."/>
            <person name="Mikhailova N."/>
            <person name="Wu J.H.D."/>
            <person name="Newcomb M."/>
            <person name="Richardson P."/>
        </authorList>
    </citation>
    <scope>NUCLEOTIDE SEQUENCE [LARGE SCALE GENOMIC DNA]</scope>
    <source>
        <strain>ATCC 27405 / DSM 1237 / JCM 9322 / NBRC 103400 / NCIMB 10682 / NRRL B-4536 / VPI 7372</strain>
    </source>
</reference>
<gene>
    <name evidence="1" type="primary">argR</name>
    <name type="ordered locus">Cthe_0815</name>
</gene>
<keyword id="KW-0028">Amino-acid biosynthesis</keyword>
<keyword id="KW-0055">Arginine biosynthesis</keyword>
<keyword id="KW-0963">Cytoplasm</keyword>
<keyword id="KW-0238">DNA-binding</keyword>
<keyword id="KW-1185">Reference proteome</keyword>
<keyword id="KW-0678">Repressor</keyword>
<keyword id="KW-0804">Transcription</keyword>
<keyword id="KW-0805">Transcription regulation</keyword>
<accession>A3DDM1</accession>
<comment type="function">
    <text evidence="1">Regulates arginine biosynthesis genes.</text>
</comment>
<comment type="pathway">
    <text>Amino-acid biosynthesis; L-arginine biosynthesis [regulation].</text>
</comment>
<comment type="subcellular location">
    <subcellularLocation>
        <location evidence="1">Cytoplasm</location>
    </subcellularLocation>
</comment>
<comment type="similarity">
    <text evidence="1">Belongs to the ArgR family.</text>
</comment>
<feature type="chain" id="PRO_1000023559" description="Arginine repressor">
    <location>
        <begin position="1"/>
        <end position="153"/>
    </location>
</feature>
<protein>
    <recommendedName>
        <fullName evidence="1">Arginine repressor</fullName>
    </recommendedName>
</protein>
<dbReference type="EMBL" id="CP000568">
    <property type="protein sequence ID" value="ABN52050.1"/>
    <property type="molecule type" value="Genomic_DNA"/>
</dbReference>
<dbReference type="RefSeq" id="WP_003518724.1">
    <property type="nucleotide sequence ID" value="NC_009012.1"/>
</dbReference>
<dbReference type="SMR" id="A3DDM1"/>
<dbReference type="STRING" id="203119.Cthe_0815"/>
<dbReference type="GeneID" id="35804572"/>
<dbReference type="KEGG" id="cth:Cthe_0815"/>
<dbReference type="eggNOG" id="COG1438">
    <property type="taxonomic scope" value="Bacteria"/>
</dbReference>
<dbReference type="HOGENOM" id="CLU_097103_3_0_9"/>
<dbReference type="OrthoDB" id="9807089at2"/>
<dbReference type="UniPathway" id="UPA00068"/>
<dbReference type="Proteomes" id="UP000002145">
    <property type="component" value="Chromosome"/>
</dbReference>
<dbReference type="GO" id="GO:0005737">
    <property type="term" value="C:cytoplasm"/>
    <property type="evidence" value="ECO:0007669"/>
    <property type="project" value="UniProtKB-SubCell"/>
</dbReference>
<dbReference type="GO" id="GO:0034618">
    <property type="term" value="F:arginine binding"/>
    <property type="evidence" value="ECO:0007669"/>
    <property type="project" value="InterPro"/>
</dbReference>
<dbReference type="GO" id="GO:0003677">
    <property type="term" value="F:DNA binding"/>
    <property type="evidence" value="ECO:0007669"/>
    <property type="project" value="UniProtKB-KW"/>
</dbReference>
<dbReference type="GO" id="GO:0003700">
    <property type="term" value="F:DNA-binding transcription factor activity"/>
    <property type="evidence" value="ECO:0007669"/>
    <property type="project" value="UniProtKB-UniRule"/>
</dbReference>
<dbReference type="GO" id="GO:0006526">
    <property type="term" value="P:L-arginine biosynthetic process"/>
    <property type="evidence" value="ECO:0007669"/>
    <property type="project" value="UniProtKB-UniPathway"/>
</dbReference>
<dbReference type="GO" id="GO:0051259">
    <property type="term" value="P:protein complex oligomerization"/>
    <property type="evidence" value="ECO:0007669"/>
    <property type="project" value="InterPro"/>
</dbReference>
<dbReference type="GO" id="GO:1900079">
    <property type="term" value="P:regulation of arginine biosynthetic process"/>
    <property type="evidence" value="ECO:0007669"/>
    <property type="project" value="UniProtKB-UniRule"/>
</dbReference>
<dbReference type="Gene3D" id="3.30.1360.40">
    <property type="match status" value="1"/>
</dbReference>
<dbReference type="Gene3D" id="1.10.10.10">
    <property type="entry name" value="Winged helix-like DNA-binding domain superfamily/Winged helix DNA-binding domain"/>
    <property type="match status" value="1"/>
</dbReference>
<dbReference type="HAMAP" id="MF_00173">
    <property type="entry name" value="Arg_repressor"/>
    <property type="match status" value="1"/>
</dbReference>
<dbReference type="InterPro" id="IPR001669">
    <property type="entry name" value="Arg_repress"/>
</dbReference>
<dbReference type="InterPro" id="IPR020899">
    <property type="entry name" value="Arg_repress_C"/>
</dbReference>
<dbReference type="InterPro" id="IPR036251">
    <property type="entry name" value="Arg_repress_C_sf"/>
</dbReference>
<dbReference type="InterPro" id="IPR020900">
    <property type="entry name" value="Arg_repress_DNA-bd"/>
</dbReference>
<dbReference type="InterPro" id="IPR036388">
    <property type="entry name" value="WH-like_DNA-bd_sf"/>
</dbReference>
<dbReference type="InterPro" id="IPR036390">
    <property type="entry name" value="WH_DNA-bd_sf"/>
</dbReference>
<dbReference type="NCBIfam" id="TIGR01529">
    <property type="entry name" value="argR_whole"/>
    <property type="match status" value="1"/>
</dbReference>
<dbReference type="NCBIfam" id="NF001680">
    <property type="entry name" value="PRK00441.1"/>
    <property type="match status" value="1"/>
</dbReference>
<dbReference type="PANTHER" id="PTHR34471">
    <property type="entry name" value="ARGININE REPRESSOR"/>
    <property type="match status" value="1"/>
</dbReference>
<dbReference type="PANTHER" id="PTHR34471:SF1">
    <property type="entry name" value="ARGININE REPRESSOR"/>
    <property type="match status" value="1"/>
</dbReference>
<dbReference type="Pfam" id="PF01316">
    <property type="entry name" value="Arg_repressor"/>
    <property type="match status" value="1"/>
</dbReference>
<dbReference type="Pfam" id="PF02863">
    <property type="entry name" value="Arg_repressor_C"/>
    <property type="match status" value="1"/>
</dbReference>
<dbReference type="PRINTS" id="PR01467">
    <property type="entry name" value="ARGREPRESSOR"/>
</dbReference>
<dbReference type="SUPFAM" id="SSF55252">
    <property type="entry name" value="C-terminal domain of arginine repressor"/>
    <property type="match status" value="1"/>
</dbReference>
<dbReference type="SUPFAM" id="SSF46785">
    <property type="entry name" value="Winged helix' DNA-binding domain"/>
    <property type="match status" value="1"/>
</dbReference>
<name>ARGR_ACET2</name>
<evidence type="ECO:0000255" key="1">
    <source>
        <dbReference type="HAMAP-Rule" id="MF_00173"/>
    </source>
</evidence>
<organism>
    <name type="scientific">Acetivibrio thermocellus (strain ATCC 27405 / DSM 1237 / JCM 9322 / NBRC 103400 / NCIMB 10682 / NRRL B-4536 / VPI 7372)</name>
    <name type="common">Clostridium thermocellum</name>
    <dbReference type="NCBI Taxonomy" id="203119"/>
    <lineage>
        <taxon>Bacteria</taxon>
        <taxon>Bacillati</taxon>
        <taxon>Bacillota</taxon>
        <taxon>Clostridia</taxon>
        <taxon>Eubacteriales</taxon>
        <taxon>Oscillospiraceae</taxon>
        <taxon>Acetivibrio</taxon>
    </lineage>
</organism>
<sequence length="153" mass="17065">MKHARQAKILEIIDKEVIETQEEIADRLKKAGMEVTQATISRDIKELRLIKVMTEDGRYKYAPFNSTDNTVFNRLMTVFSKSYVSSDYANNIVVVKTLPGMAPAAASAIDSMNYPEIVGSIAGDDTVLIVCRSEKIAKEFVEKLSKLAKSDDK</sequence>